<proteinExistence type="inferred from homology"/>
<reference key="1">
    <citation type="journal article" date="2005" name="J. Bacteriol.">
        <title>Complete genome sequence and analysis of the multiresistant nosocomial pathogen Corynebacterium jeikeium K411, a lipid-requiring bacterium of the human skin flora.</title>
        <authorList>
            <person name="Tauch A."/>
            <person name="Kaiser O."/>
            <person name="Hain T."/>
            <person name="Goesmann A."/>
            <person name="Weisshaar B."/>
            <person name="Albersmeier A."/>
            <person name="Bekel T."/>
            <person name="Bischoff N."/>
            <person name="Brune I."/>
            <person name="Chakraborty T."/>
            <person name="Kalinowski J."/>
            <person name="Meyer F."/>
            <person name="Rupp O."/>
            <person name="Schneiker S."/>
            <person name="Viehoever P."/>
            <person name="Puehler A."/>
        </authorList>
    </citation>
    <scope>NUCLEOTIDE SEQUENCE [LARGE SCALE GENOMIC DNA]</scope>
    <source>
        <strain>K411</strain>
    </source>
</reference>
<gene>
    <name type="ordered locus">jk0264</name>
</gene>
<protein>
    <recommendedName>
        <fullName evidence="1">Putative glutamate--cysteine ligase 2</fullName>
        <ecNumber evidence="1">6.3.2.2</ecNumber>
    </recommendedName>
    <alternativeName>
        <fullName evidence="1">Gamma-glutamylcysteine synthetase 2</fullName>
        <shortName evidence="1">GCS 2</shortName>
        <shortName evidence="1">Gamma-GCS 2</shortName>
    </alternativeName>
</protein>
<keyword id="KW-0067">ATP-binding</keyword>
<keyword id="KW-0436">Ligase</keyword>
<keyword id="KW-0547">Nucleotide-binding</keyword>
<keyword id="KW-1185">Reference proteome</keyword>
<feature type="chain" id="PRO_0000255798" description="Putative glutamate--cysteine ligase 2">
    <location>
        <begin position="1"/>
        <end position="392"/>
    </location>
</feature>
<feature type="region of interest" description="Disordered" evidence="2">
    <location>
        <begin position="347"/>
        <end position="367"/>
    </location>
</feature>
<comment type="function">
    <text evidence="1">ATP-dependent carboxylate-amine ligase which exhibits weak glutamate--cysteine ligase activity.</text>
</comment>
<comment type="catalytic activity">
    <reaction evidence="1">
        <text>L-cysteine + L-glutamate + ATP = gamma-L-glutamyl-L-cysteine + ADP + phosphate + H(+)</text>
        <dbReference type="Rhea" id="RHEA:13285"/>
        <dbReference type="ChEBI" id="CHEBI:15378"/>
        <dbReference type="ChEBI" id="CHEBI:29985"/>
        <dbReference type="ChEBI" id="CHEBI:30616"/>
        <dbReference type="ChEBI" id="CHEBI:35235"/>
        <dbReference type="ChEBI" id="CHEBI:43474"/>
        <dbReference type="ChEBI" id="CHEBI:58173"/>
        <dbReference type="ChEBI" id="CHEBI:456216"/>
        <dbReference type="EC" id="6.3.2.2"/>
    </reaction>
</comment>
<comment type="similarity">
    <text evidence="1">Belongs to the glutamate--cysteine ligase type 2 family. YbdK subfamily.</text>
</comment>
<sequence length="392" mass="43904">MDFPGSAPSVGIEWEVALVDPETRDLVPRAAELIARMDEVHPGHKVVREFLANTVEMVSGVHDTIPEAVEDLHVQAKQLMECADDIGVNLFSAGTHPFAHWGDQKLSEKGSYQEIIERTQYWGRQMLIWGIHVHVGVGSKEKVWPIINALMTHYPHILAMSASSPAWEGLDTGYSSNRTLLYQQLPTAGMPYQFENWEQWEEFNRDQDLSGVINHTGSMHFDVRPTKYGTVETRFADATMELWELAAIAAYTHCLVVYFERRLDAGHELPTLQPWHVAENKWRAARYGLDALIITDRETNEALVTDELDAWVDRLAPLSEELGCAAELQDVRKLIARGGDYALQRAAARKHGAAPEPGTRTRGDDGVEGGFTQPEAWIAAVDLTVDSLRKSL</sequence>
<name>GCS2_CORJK</name>
<evidence type="ECO:0000255" key="1">
    <source>
        <dbReference type="HAMAP-Rule" id="MF_01609"/>
    </source>
</evidence>
<evidence type="ECO:0000256" key="2">
    <source>
        <dbReference type="SAM" id="MobiDB-lite"/>
    </source>
</evidence>
<accession>Q4JXP1</accession>
<dbReference type="EC" id="6.3.2.2" evidence="1"/>
<dbReference type="EMBL" id="CR931997">
    <property type="protein sequence ID" value="CAI36416.1"/>
    <property type="molecule type" value="Genomic_DNA"/>
</dbReference>
<dbReference type="RefSeq" id="WP_011272981.1">
    <property type="nucleotide sequence ID" value="NC_007164.1"/>
</dbReference>
<dbReference type="SMR" id="Q4JXP1"/>
<dbReference type="STRING" id="306537.jk0264"/>
<dbReference type="KEGG" id="cjk:jk0264"/>
<dbReference type="PATRIC" id="fig|306537.10.peg.274"/>
<dbReference type="eggNOG" id="COG2170">
    <property type="taxonomic scope" value="Bacteria"/>
</dbReference>
<dbReference type="HOGENOM" id="CLU_044848_1_1_11"/>
<dbReference type="OrthoDB" id="9769628at2"/>
<dbReference type="Proteomes" id="UP000000545">
    <property type="component" value="Chromosome"/>
</dbReference>
<dbReference type="GO" id="GO:0005524">
    <property type="term" value="F:ATP binding"/>
    <property type="evidence" value="ECO:0007669"/>
    <property type="project" value="UniProtKB-KW"/>
</dbReference>
<dbReference type="GO" id="GO:0004357">
    <property type="term" value="F:glutamate-cysteine ligase activity"/>
    <property type="evidence" value="ECO:0007669"/>
    <property type="project" value="UniProtKB-EC"/>
</dbReference>
<dbReference type="GO" id="GO:0042398">
    <property type="term" value="P:modified amino acid biosynthetic process"/>
    <property type="evidence" value="ECO:0007669"/>
    <property type="project" value="InterPro"/>
</dbReference>
<dbReference type="Gene3D" id="3.30.590.20">
    <property type="match status" value="1"/>
</dbReference>
<dbReference type="HAMAP" id="MF_01609">
    <property type="entry name" value="Glu_cys_ligase_2"/>
    <property type="match status" value="1"/>
</dbReference>
<dbReference type="InterPro" id="IPR050141">
    <property type="entry name" value="GCL_type2/YbdK_subfam"/>
</dbReference>
<dbReference type="InterPro" id="IPR006336">
    <property type="entry name" value="GCS2"/>
</dbReference>
<dbReference type="InterPro" id="IPR014746">
    <property type="entry name" value="Gln_synth/guanido_kin_cat_dom"/>
</dbReference>
<dbReference type="InterPro" id="IPR011793">
    <property type="entry name" value="YbdK"/>
</dbReference>
<dbReference type="NCBIfam" id="TIGR02050">
    <property type="entry name" value="gshA_cyan_rel"/>
    <property type="match status" value="1"/>
</dbReference>
<dbReference type="NCBIfam" id="NF010042">
    <property type="entry name" value="PRK13517.1-2"/>
    <property type="match status" value="1"/>
</dbReference>
<dbReference type="NCBIfam" id="NF010044">
    <property type="entry name" value="PRK13517.1-4"/>
    <property type="match status" value="1"/>
</dbReference>
<dbReference type="PANTHER" id="PTHR36510">
    <property type="entry name" value="GLUTAMATE--CYSTEINE LIGASE 2-RELATED"/>
    <property type="match status" value="1"/>
</dbReference>
<dbReference type="PANTHER" id="PTHR36510:SF1">
    <property type="entry name" value="GLUTAMATE--CYSTEINE LIGASE 2-RELATED"/>
    <property type="match status" value="1"/>
</dbReference>
<dbReference type="Pfam" id="PF04107">
    <property type="entry name" value="GCS2"/>
    <property type="match status" value="1"/>
</dbReference>
<dbReference type="SUPFAM" id="SSF55931">
    <property type="entry name" value="Glutamine synthetase/guanido kinase"/>
    <property type="match status" value="1"/>
</dbReference>
<organism>
    <name type="scientific">Corynebacterium jeikeium (strain K411)</name>
    <dbReference type="NCBI Taxonomy" id="306537"/>
    <lineage>
        <taxon>Bacteria</taxon>
        <taxon>Bacillati</taxon>
        <taxon>Actinomycetota</taxon>
        <taxon>Actinomycetes</taxon>
        <taxon>Mycobacteriales</taxon>
        <taxon>Corynebacteriaceae</taxon>
        <taxon>Corynebacterium</taxon>
    </lineage>
</organism>